<name>ISPF_ORYSJ</name>
<dbReference type="EC" id="4.6.1.12" evidence="9"/>
<dbReference type="EMBL" id="AP005823">
    <property type="protein sequence ID" value="BAD29384.1"/>
    <property type="molecule type" value="Genomic_DNA"/>
</dbReference>
<dbReference type="EMBL" id="AP008208">
    <property type="protein sequence ID" value="BAF09655.1"/>
    <property type="status" value="ALT_INIT"/>
    <property type="molecule type" value="Genomic_DNA"/>
</dbReference>
<dbReference type="EMBL" id="AP014958">
    <property type="protein sequence ID" value="BAS80297.1"/>
    <property type="status" value="ALT_INIT"/>
    <property type="molecule type" value="Genomic_DNA"/>
</dbReference>
<dbReference type="EMBL" id="AK060238">
    <property type="protein sequence ID" value="BAG87377.1"/>
    <property type="status" value="ALT_INIT"/>
    <property type="molecule type" value="mRNA"/>
</dbReference>
<dbReference type="RefSeq" id="XP_015627624.1">
    <property type="nucleotide sequence ID" value="XM_015772138.1"/>
</dbReference>
<dbReference type="SMR" id="Q6EPN6"/>
<dbReference type="FunCoup" id="Q6EPN6">
    <property type="interactions" value="783"/>
</dbReference>
<dbReference type="STRING" id="39947.Q6EPN6"/>
<dbReference type="PaxDb" id="39947-Q6EPN6"/>
<dbReference type="KEGG" id="dosa:Os02g0680600"/>
<dbReference type="eggNOG" id="ENOG502QS77">
    <property type="taxonomic scope" value="Eukaryota"/>
</dbReference>
<dbReference type="HOGENOM" id="CLU_084630_0_0_1"/>
<dbReference type="InParanoid" id="Q6EPN6"/>
<dbReference type="OrthoDB" id="2015434at2759"/>
<dbReference type="PlantReactome" id="R-OSA-1119464">
    <property type="pathway name" value="Methylerythritol phosphate pathway"/>
</dbReference>
<dbReference type="UniPathway" id="UPA00056">
    <property type="reaction ID" value="UER00095"/>
</dbReference>
<dbReference type="Proteomes" id="UP000000763">
    <property type="component" value="Chromosome 2"/>
</dbReference>
<dbReference type="Proteomes" id="UP000059680">
    <property type="component" value="Chromosome 2"/>
</dbReference>
<dbReference type="GO" id="GO:0009507">
    <property type="term" value="C:chloroplast"/>
    <property type="evidence" value="ECO:0007669"/>
    <property type="project" value="UniProtKB-SubCell"/>
</dbReference>
<dbReference type="GO" id="GO:0008685">
    <property type="term" value="F:2-C-methyl-D-erythritol 2,4-cyclodiphosphate synthase activity"/>
    <property type="evidence" value="ECO:0000318"/>
    <property type="project" value="GO_Central"/>
</dbReference>
<dbReference type="GO" id="GO:0046872">
    <property type="term" value="F:metal ion binding"/>
    <property type="evidence" value="ECO:0007669"/>
    <property type="project" value="UniProtKB-KW"/>
</dbReference>
<dbReference type="GO" id="GO:0019288">
    <property type="term" value="P:isopentenyl diphosphate biosynthetic process, methylerythritol 4-phosphate pathway"/>
    <property type="evidence" value="ECO:0007669"/>
    <property type="project" value="UniProtKB-UniPathway"/>
</dbReference>
<dbReference type="GO" id="GO:0016114">
    <property type="term" value="P:terpenoid biosynthetic process"/>
    <property type="evidence" value="ECO:0007669"/>
    <property type="project" value="InterPro"/>
</dbReference>
<dbReference type="CDD" id="cd00554">
    <property type="entry name" value="MECDP_synthase"/>
    <property type="match status" value="1"/>
</dbReference>
<dbReference type="FunFam" id="3.30.1330.50:FF:000002">
    <property type="entry name" value="2-C-methyl-D-erythritol 2,4-cyclodiphosphate synthase"/>
    <property type="match status" value="1"/>
</dbReference>
<dbReference type="Gene3D" id="3.30.1330.50">
    <property type="entry name" value="2-C-methyl-D-erythritol 2,4-cyclodiphosphate synthase"/>
    <property type="match status" value="1"/>
</dbReference>
<dbReference type="HAMAP" id="MF_00107">
    <property type="entry name" value="IspF"/>
    <property type="match status" value="1"/>
</dbReference>
<dbReference type="InterPro" id="IPR003526">
    <property type="entry name" value="MECDP_synthase"/>
</dbReference>
<dbReference type="InterPro" id="IPR020555">
    <property type="entry name" value="MECDP_synthase_CS"/>
</dbReference>
<dbReference type="InterPro" id="IPR036571">
    <property type="entry name" value="MECDP_synthase_sf"/>
</dbReference>
<dbReference type="NCBIfam" id="TIGR00151">
    <property type="entry name" value="ispF"/>
    <property type="match status" value="1"/>
</dbReference>
<dbReference type="PANTHER" id="PTHR43181">
    <property type="entry name" value="2-C-METHYL-D-ERYTHRITOL 2,4-CYCLODIPHOSPHATE SYNTHASE, CHLOROPLASTIC"/>
    <property type="match status" value="1"/>
</dbReference>
<dbReference type="PANTHER" id="PTHR43181:SF1">
    <property type="entry name" value="2-C-METHYL-D-ERYTHRITOL 2,4-CYCLODIPHOSPHATE SYNTHASE, CHLOROPLASTIC"/>
    <property type="match status" value="1"/>
</dbReference>
<dbReference type="Pfam" id="PF02542">
    <property type="entry name" value="YgbB"/>
    <property type="match status" value="1"/>
</dbReference>
<dbReference type="SUPFAM" id="SSF69765">
    <property type="entry name" value="IpsF-like"/>
    <property type="match status" value="1"/>
</dbReference>
<dbReference type="PROSITE" id="PS01350">
    <property type="entry name" value="ISPF"/>
    <property type="match status" value="1"/>
</dbReference>
<comment type="function">
    <text evidence="5 9">Enzyme of the plastid non-mevalonate pathway for isoprenoid biosynthesis that converts 4-diphosphocytidyl-2C-methyl-D-erythritol 2-phosphate into 2C-methyl-D-erythritol 2,4-cyclodiphosphate and CMP (Probable). Is essential for chloroplast development (PubMed:29143298).</text>
</comment>
<comment type="catalytic activity">
    <reaction evidence="9">
        <text>4-CDP-2-C-methyl-D-erythritol 2-phosphate = 2-C-methyl-D-erythritol 2,4-cyclic diphosphate + CMP</text>
        <dbReference type="Rhea" id="RHEA:23864"/>
        <dbReference type="ChEBI" id="CHEBI:57919"/>
        <dbReference type="ChEBI" id="CHEBI:58483"/>
        <dbReference type="ChEBI" id="CHEBI:60377"/>
        <dbReference type="EC" id="4.6.1.12"/>
    </reaction>
</comment>
<comment type="cofactor">
    <cofactor evidence="2">
        <name>a divalent metal cation</name>
        <dbReference type="ChEBI" id="CHEBI:60240"/>
    </cofactor>
    <text evidence="2">Binds 1 divalent metal cation per subunit.</text>
</comment>
<comment type="pathway">
    <text evidence="8">Isoprenoid biosynthesis; isopentenyl diphosphate biosynthesis via DXP pathway; isopentenyl diphosphate from 1-deoxy-D-xylulose 5-phosphate: step 4/6.</text>
</comment>
<comment type="subunit">
    <text evidence="2">Homotrimer.</text>
</comment>
<comment type="subcellular location">
    <subcellularLocation>
        <location evidence="5">Plastid</location>
        <location evidence="5">Chloroplast</location>
    </subcellularLocation>
</comment>
<comment type="tissue specificity">
    <text evidence="5">Expressed in roots, leaves, stems, leaf sheaths and young panicles.</text>
</comment>
<comment type="induction">
    <text evidence="4">Induced by jasmonate, copper, UV and chitin oligosaccharide elicitor.</text>
</comment>
<comment type="similarity">
    <text evidence="8">Belongs to the IspF family.</text>
</comment>
<comment type="sequence caution" evidence="8">
    <conflict type="erroneous initiation">
        <sequence resource="EMBL-CDS" id="BAF09655"/>
    </conflict>
    <text>Extended N-terminus.</text>
</comment>
<comment type="sequence caution" evidence="8">
    <conflict type="erroneous initiation">
        <sequence resource="EMBL-CDS" id="BAG87377"/>
    </conflict>
    <text>Extended N-terminus.</text>
</comment>
<comment type="sequence caution" evidence="8">
    <conflict type="erroneous initiation">
        <sequence resource="EMBL-CDS" id="BAS80297"/>
    </conflict>
    <text>Extended N-terminus.</text>
</comment>
<reference key="1">
    <citation type="journal article" date="2005" name="Nature">
        <title>The map-based sequence of the rice genome.</title>
        <authorList>
            <consortium name="International rice genome sequencing project (IRGSP)"/>
        </authorList>
    </citation>
    <scope>NUCLEOTIDE SEQUENCE [LARGE SCALE GENOMIC DNA]</scope>
    <source>
        <strain>cv. Nipponbare</strain>
    </source>
</reference>
<reference key="2">
    <citation type="journal article" date="2008" name="Nucleic Acids Res.">
        <title>The rice annotation project database (RAP-DB): 2008 update.</title>
        <authorList>
            <consortium name="The rice annotation project (RAP)"/>
        </authorList>
    </citation>
    <scope>GENOME REANNOTATION</scope>
    <source>
        <strain>cv. Nipponbare</strain>
    </source>
</reference>
<reference key="3">
    <citation type="journal article" date="2013" name="Rice">
        <title>Improvement of the Oryza sativa Nipponbare reference genome using next generation sequence and optical map data.</title>
        <authorList>
            <person name="Kawahara Y."/>
            <person name="de la Bastide M."/>
            <person name="Hamilton J.P."/>
            <person name="Kanamori H."/>
            <person name="McCombie W.R."/>
            <person name="Ouyang S."/>
            <person name="Schwartz D.C."/>
            <person name="Tanaka T."/>
            <person name="Wu J."/>
            <person name="Zhou S."/>
            <person name="Childs K.L."/>
            <person name="Davidson R.M."/>
            <person name="Lin H."/>
            <person name="Quesada-Ocampo L."/>
            <person name="Vaillancourt B."/>
            <person name="Sakai H."/>
            <person name="Lee S.S."/>
            <person name="Kim J."/>
            <person name="Numa H."/>
            <person name="Itoh T."/>
            <person name="Buell C.R."/>
            <person name="Matsumoto T."/>
        </authorList>
    </citation>
    <scope>GENOME REANNOTATION</scope>
    <source>
        <strain>cv. Nipponbare</strain>
    </source>
</reference>
<reference key="4">
    <citation type="journal article" date="2003" name="Science">
        <title>Collection, mapping, and annotation of over 28,000 cDNA clones from japonica rice.</title>
        <authorList>
            <consortium name="The rice full-length cDNA consortium"/>
        </authorList>
    </citation>
    <scope>NUCLEOTIDE SEQUENCE [LARGE SCALE MRNA]</scope>
    <source>
        <strain>cv. Nipponbare</strain>
    </source>
</reference>
<reference key="5">
    <citation type="journal article" date="2007" name="Plant Mol. Biol.">
        <title>Elicitor induced activation of the methylerythritol phosphate pathway toward phytoalexins biosynthesis in rice.</title>
        <authorList>
            <person name="Okada A."/>
            <person name="Shimizu T."/>
            <person name="Okada K."/>
            <person name="Kuzuyama T."/>
            <person name="Koga J."/>
            <person name="Shibuya N."/>
            <person name="Nojiri H."/>
            <person name="Yamane H."/>
        </authorList>
    </citation>
    <scope>INDUCTION</scope>
</reference>
<reference key="6">
    <citation type="journal article" date="2018" name="Plant Mol. Biol.">
        <title>A single nucleotide mutation of IspF gene involved in the MEP pathway for isoprenoid biosynthesis causes yellow-green leaf phenotype in rice.</title>
        <authorList>
            <person name="Huang R."/>
            <person name="Wang Y."/>
            <person name="Wang P."/>
            <person name="Li C."/>
            <person name="Xiao F."/>
            <person name="Chen N."/>
            <person name="Li N."/>
            <person name="Li C."/>
            <person name="Sun C."/>
            <person name="Li L."/>
            <person name="Chen R."/>
            <person name="Xu Z."/>
            <person name="Zhu J."/>
            <person name="Deng X."/>
        </authorList>
    </citation>
    <scope>FUNCTION</scope>
    <scope>CATALYTIC ACTIVITY</scope>
    <scope>SUBCELLULAR LOCATION</scope>
    <scope>TISSUE SPECIFICITY</scope>
    <scope>MUTAGENESIS OF LEU-117</scope>
</reference>
<sequence>MATASSLFLASPVATAPTARARSTPSASPARPSLRLRRPSTLAAAAVQAEHQPAVAAAPKPPALPFRVGHGFDLHRLEPGLPLIIGGIDIPHDRGCDAHSDGDVLLHCVVDAILGALGLPDIGQIFPDSDPRWKGADSSVFMREAVKLMHEAGYELGNLDATLILQKPKISPFKETIRSNLCDLLGADPSVVNLKAKTHEKVDSLGENRSIAAHTVVLLMRK</sequence>
<evidence type="ECO:0000250" key="1">
    <source>
        <dbReference type="UniProtKB" id="P62617"/>
    </source>
</evidence>
<evidence type="ECO:0000250" key="2">
    <source>
        <dbReference type="UniProtKB" id="Q9CAK8"/>
    </source>
</evidence>
<evidence type="ECO:0000255" key="3"/>
<evidence type="ECO:0000269" key="4">
    <source>
    </source>
</evidence>
<evidence type="ECO:0000269" key="5">
    <source>
    </source>
</evidence>
<evidence type="ECO:0000303" key="6">
    <source>
    </source>
</evidence>
<evidence type="ECO:0000303" key="7">
    <source>
    </source>
</evidence>
<evidence type="ECO:0000305" key="8"/>
<evidence type="ECO:0000305" key="9">
    <source>
    </source>
</evidence>
<evidence type="ECO:0000312" key="10">
    <source>
        <dbReference type="EMBL" id="BAD29384.1"/>
    </source>
</evidence>
<evidence type="ECO:0000312" key="11">
    <source>
        <dbReference type="EMBL" id="BAS80297.1"/>
    </source>
</evidence>
<gene>
    <name evidence="7" type="primary">ISPF</name>
    <name evidence="6" type="synonym">MCS</name>
    <name evidence="11" type="ordered locus">Os02g0680600</name>
    <name evidence="8" type="ordered locus">LOC_Os02g45660</name>
    <name evidence="10" type="ORF">P0663F07.27</name>
</gene>
<protein>
    <recommendedName>
        <fullName evidence="8">2-C-methyl-D-erythritol 2,4-cyclodiphosphate synthase, chloroplastic</fullName>
        <shortName evidence="6">MECDP-synthase</shortName>
        <shortName evidence="8">MECPS</shortName>
        <shortName evidence="8">MECS</shortName>
        <ecNumber evidence="9">4.6.1.12</ecNumber>
    </recommendedName>
</protein>
<feature type="transit peptide" description="Chloroplast" evidence="3">
    <location>
        <begin position="1"/>
        <end position="43"/>
    </location>
</feature>
<feature type="chain" id="PRO_0000417597" description="2-C-methyl-D-erythritol 2,4-cyclodiphosphate synthase, chloroplastic">
    <location>
        <begin position="44"/>
        <end position="222"/>
    </location>
</feature>
<feature type="binding site" evidence="1">
    <location>
        <begin position="73"/>
        <end position="75"/>
    </location>
    <ligand>
        <name>substrate</name>
    </ligand>
</feature>
<feature type="binding site" evidence="1">
    <location>
        <position position="73"/>
    </location>
    <ligand>
        <name>a divalent metal cation</name>
        <dbReference type="ChEBI" id="CHEBI:60240"/>
    </ligand>
</feature>
<feature type="binding site" evidence="1">
    <location>
        <position position="75"/>
    </location>
    <ligand>
        <name>a divalent metal cation</name>
        <dbReference type="ChEBI" id="CHEBI:60240"/>
    </ligand>
</feature>
<feature type="binding site" evidence="1">
    <location>
        <begin position="99"/>
        <end position="100"/>
    </location>
    <ligand>
        <name>substrate</name>
    </ligand>
</feature>
<feature type="binding site" evidence="1">
    <location>
        <begin position="103"/>
        <end position="111"/>
    </location>
    <ligand>
        <name>substrate</name>
    </ligand>
</feature>
<feature type="binding site" evidence="1">
    <location>
        <position position="107"/>
    </location>
    <ligand>
        <name>a divalent metal cation</name>
        <dbReference type="ChEBI" id="CHEBI:60240"/>
    </ligand>
</feature>
<feature type="binding site" evidence="1">
    <location>
        <begin position="121"/>
        <end position="123"/>
    </location>
    <ligand>
        <name>substrate</name>
    </ligand>
</feature>
<feature type="binding site" evidence="1">
    <location>
        <begin position="126"/>
        <end position="130"/>
    </location>
    <ligand>
        <name>substrate</name>
    </ligand>
</feature>
<feature type="binding site" evidence="1">
    <location>
        <position position="130"/>
    </location>
    <ligand>
        <name>substrate</name>
    </ligand>
</feature>
<feature type="binding site" evidence="1">
    <location>
        <begin position="165"/>
        <end position="171"/>
    </location>
    <ligand>
        <name>substrate</name>
    </ligand>
</feature>
<feature type="binding site" evidence="1">
    <location>
        <begin position="196"/>
        <end position="200"/>
    </location>
    <ligand>
        <name>substrate</name>
    </ligand>
</feature>
<feature type="site" description="Transition state stabilizer" evidence="1">
    <location>
        <position position="99"/>
    </location>
</feature>
<feature type="site" description="Transition state stabilizer" evidence="1">
    <location>
        <position position="198"/>
    </location>
</feature>
<feature type="mutagenesis site" description="In 505ys; yellow-green leaf phenotype, delayed heading, and reduced seed-setting rate and grain weight." evidence="5">
    <original>L</original>
    <variation>F</variation>
    <location>
        <position position="117"/>
    </location>
</feature>
<keyword id="KW-0150">Chloroplast</keyword>
<keyword id="KW-0414">Isoprene biosynthesis</keyword>
<keyword id="KW-0456">Lyase</keyword>
<keyword id="KW-0479">Metal-binding</keyword>
<keyword id="KW-0934">Plastid</keyword>
<keyword id="KW-1185">Reference proteome</keyword>
<keyword id="KW-0809">Transit peptide</keyword>
<accession>Q6EPN6</accession>
<accession>A0A0N7KFV8</accession>
<accession>Q0DYN3</accession>
<proteinExistence type="evidence at protein level"/>
<organism>
    <name type="scientific">Oryza sativa subsp. japonica</name>
    <name type="common">Rice</name>
    <dbReference type="NCBI Taxonomy" id="39947"/>
    <lineage>
        <taxon>Eukaryota</taxon>
        <taxon>Viridiplantae</taxon>
        <taxon>Streptophyta</taxon>
        <taxon>Embryophyta</taxon>
        <taxon>Tracheophyta</taxon>
        <taxon>Spermatophyta</taxon>
        <taxon>Magnoliopsida</taxon>
        <taxon>Liliopsida</taxon>
        <taxon>Poales</taxon>
        <taxon>Poaceae</taxon>
        <taxon>BOP clade</taxon>
        <taxon>Oryzoideae</taxon>
        <taxon>Oryzeae</taxon>
        <taxon>Oryzinae</taxon>
        <taxon>Oryza</taxon>
        <taxon>Oryza sativa</taxon>
    </lineage>
</organism>